<evidence type="ECO:0000255" key="1">
    <source>
        <dbReference type="HAMAP-Rule" id="MF_01007"/>
    </source>
</evidence>
<accession>Q3YRX7</accession>
<proteinExistence type="inferred from homology"/>
<protein>
    <recommendedName>
        <fullName evidence="1">Ribosomal RNA small subunit methyltransferase H</fullName>
        <ecNumber evidence="1">2.1.1.199</ecNumber>
    </recommendedName>
    <alternativeName>
        <fullName evidence="1">16S rRNA m(4)C1402 methyltransferase</fullName>
    </alternativeName>
    <alternativeName>
        <fullName evidence="1">rRNA (cytosine-N(4)-)-methyltransferase RsmH</fullName>
    </alternativeName>
</protein>
<feature type="chain" id="PRO_0000223543" description="Ribosomal RNA small subunit methyltransferase H">
    <location>
        <begin position="1"/>
        <end position="297"/>
    </location>
</feature>
<feature type="binding site" evidence="1">
    <location>
        <begin position="30"/>
        <end position="32"/>
    </location>
    <ligand>
        <name>S-adenosyl-L-methionine</name>
        <dbReference type="ChEBI" id="CHEBI:59789"/>
    </ligand>
</feature>
<feature type="binding site" evidence="1">
    <location>
        <position position="48"/>
    </location>
    <ligand>
        <name>S-adenosyl-L-methionine</name>
        <dbReference type="ChEBI" id="CHEBI:59789"/>
    </ligand>
</feature>
<feature type="binding site" evidence="1">
    <location>
        <position position="75"/>
    </location>
    <ligand>
        <name>S-adenosyl-L-methionine</name>
        <dbReference type="ChEBI" id="CHEBI:59789"/>
    </ligand>
</feature>
<feature type="binding site" evidence="1">
    <location>
        <position position="96"/>
    </location>
    <ligand>
        <name>S-adenosyl-L-methionine</name>
        <dbReference type="ChEBI" id="CHEBI:59789"/>
    </ligand>
</feature>
<feature type="binding site" evidence="1">
    <location>
        <position position="103"/>
    </location>
    <ligand>
        <name>S-adenosyl-L-methionine</name>
        <dbReference type="ChEBI" id="CHEBI:59789"/>
    </ligand>
</feature>
<gene>
    <name evidence="1" type="primary">rsmH</name>
    <name type="synonym">mraW</name>
    <name type="ordered locus">Ecaj_0491</name>
</gene>
<dbReference type="EC" id="2.1.1.199" evidence="1"/>
<dbReference type="EMBL" id="CP000107">
    <property type="protein sequence ID" value="AAZ68528.1"/>
    <property type="molecule type" value="Genomic_DNA"/>
</dbReference>
<dbReference type="RefSeq" id="WP_011304606.1">
    <property type="nucleotide sequence ID" value="NC_007354.1"/>
</dbReference>
<dbReference type="SMR" id="Q3YRX7"/>
<dbReference type="FunCoup" id="Q3YRX7">
    <property type="interactions" value="335"/>
</dbReference>
<dbReference type="STRING" id="269484.Ecaj_0491"/>
<dbReference type="KEGG" id="ecn:Ecaj_0491"/>
<dbReference type="eggNOG" id="COG0275">
    <property type="taxonomic scope" value="Bacteria"/>
</dbReference>
<dbReference type="HOGENOM" id="CLU_038422_1_1_5"/>
<dbReference type="InParanoid" id="Q3YRX7"/>
<dbReference type="Proteomes" id="UP000000435">
    <property type="component" value="Chromosome"/>
</dbReference>
<dbReference type="GO" id="GO:0005737">
    <property type="term" value="C:cytoplasm"/>
    <property type="evidence" value="ECO:0007669"/>
    <property type="project" value="UniProtKB-SubCell"/>
</dbReference>
<dbReference type="GO" id="GO:0071424">
    <property type="term" value="F:rRNA (cytosine-N4-)-methyltransferase activity"/>
    <property type="evidence" value="ECO:0007669"/>
    <property type="project" value="UniProtKB-UniRule"/>
</dbReference>
<dbReference type="GO" id="GO:0070475">
    <property type="term" value="P:rRNA base methylation"/>
    <property type="evidence" value="ECO:0007669"/>
    <property type="project" value="UniProtKB-UniRule"/>
</dbReference>
<dbReference type="FunFam" id="1.10.150.170:FF:000003">
    <property type="entry name" value="Ribosomal RNA small subunit methyltransferase H"/>
    <property type="match status" value="1"/>
</dbReference>
<dbReference type="Gene3D" id="1.10.150.170">
    <property type="entry name" value="Putative methyltransferase TM0872, insert domain"/>
    <property type="match status" value="1"/>
</dbReference>
<dbReference type="Gene3D" id="3.40.50.150">
    <property type="entry name" value="Vaccinia Virus protein VP39"/>
    <property type="match status" value="1"/>
</dbReference>
<dbReference type="HAMAP" id="MF_01007">
    <property type="entry name" value="16SrRNA_methyltr_H"/>
    <property type="match status" value="1"/>
</dbReference>
<dbReference type="InterPro" id="IPR002903">
    <property type="entry name" value="RsmH"/>
</dbReference>
<dbReference type="InterPro" id="IPR023397">
    <property type="entry name" value="SAM-dep_MeTrfase_MraW_recog"/>
</dbReference>
<dbReference type="InterPro" id="IPR029063">
    <property type="entry name" value="SAM-dependent_MTases_sf"/>
</dbReference>
<dbReference type="NCBIfam" id="TIGR00006">
    <property type="entry name" value="16S rRNA (cytosine(1402)-N(4))-methyltransferase RsmH"/>
    <property type="match status" value="1"/>
</dbReference>
<dbReference type="PANTHER" id="PTHR11265:SF0">
    <property type="entry name" value="12S RRNA N4-METHYLCYTIDINE METHYLTRANSFERASE"/>
    <property type="match status" value="1"/>
</dbReference>
<dbReference type="PANTHER" id="PTHR11265">
    <property type="entry name" value="S-ADENOSYL-METHYLTRANSFERASE MRAW"/>
    <property type="match status" value="1"/>
</dbReference>
<dbReference type="Pfam" id="PF01795">
    <property type="entry name" value="Methyltransf_5"/>
    <property type="match status" value="1"/>
</dbReference>
<dbReference type="PIRSF" id="PIRSF004486">
    <property type="entry name" value="MraW"/>
    <property type="match status" value="1"/>
</dbReference>
<dbReference type="SUPFAM" id="SSF81799">
    <property type="entry name" value="Putative methyltransferase TM0872, insert domain"/>
    <property type="match status" value="1"/>
</dbReference>
<dbReference type="SUPFAM" id="SSF53335">
    <property type="entry name" value="S-adenosyl-L-methionine-dependent methyltransferases"/>
    <property type="match status" value="1"/>
</dbReference>
<reference key="1">
    <citation type="journal article" date="2006" name="J. Bacteriol.">
        <title>The genome of the obligately intracellular bacterium Ehrlichia canis reveals themes of complex membrane structure and immune evasion strategies.</title>
        <authorList>
            <person name="Mavromatis K."/>
            <person name="Doyle C.K."/>
            <person name="Lykidis A."/>
            <person name="Ivanova N."/>
            <person name="Francino M.P."/>
            <person name="Chain P."/>
            <person name="Shin M."/>
            <person name="Malfatti S."/>
            <person name="Larimer F."/>
            <person name="Copeland A."/>
            <person name="Detter J.C."/>
            <person name="Land M."/>
            <person name="Richardson P.M."/>
            <person name="Yu X.J."/>
            <person name="Walker D.H."/>
            <person name="McBride J.W."/>
            <person name="Kyrpides N.C."/>
        </authorList>
    </citation>
    <scope>NUCLEOTIDE SEQUENCE [LARGE SCALE GENOMIC DNA]</scope>
    <source>
        <strain>Jake</strain>
    </source>
</reference>
<organism>
    <name type="scientific">Ehrlichia canis (strain Jake)</name>
    <dbReference type="NCBI Taxonomy" id="269484"/>
    <lineage>
        <taxon>Bacteria</taxon>
        <taxon>Pseudomonadati</taxon>
        <taxon>Pseudomonadota</taxon>
        <taxon>Alphaproteobacteria</taxon>
        <taxon>Rickettsiales</taxon>
        <taxon>Anaplasmataceae</taxon>
        <taxon>Ehrlichia</taxon>
    </lineage>
</organism>
<sequence>MHTPVLLKEMLEILDPQDGKIYVDATFGAGGYTKAILNAANCKVCAIDQDKHTSIFYEELANNFPNRIHFFINKFSQIKQVLLGAQLERVDGVVFDIGVSSMQLDDANRGFSFSKNGPLDMRMSTSNSIDASVFVNTVSEEEIANIIYQYGGEKYSRKIAKAIINFRKKKVIETTGELASIVRSVVSRSKNHDINPATRTFQAIRIWVNKELQELEQGIMCAADLLNPGGKIIVVSFHSLEDRIVKMIFKSLCSDEISLKLNTGFQLINKKIVRPSFEEILNNPRSRSAKLRAILKI</sequence>
<name>RSMH_EHRCJ</name>
<comment type="function">
    <text evidence="1">Specifically methylates the N4 position of cytidine in position 1402 (C1402) of 16S rRNA.</text>
</comment>
<comment type="catalytic activity">
    <reaction evidence="1">
        <text>cytidine(1402) in 16S rRNA + S-adenosyl-L-methionine = N(4)-methylcytidine(1402) in 16S rRNA + S-adenosyl-L-homocysteine + H(+)</text>
        <dbReference type="Rhea" id="RHEA:42928"/>
        <dbReference type="Rhea" id="RHEA-COMP:10286"/>
        <dbReference type="Rhea" id="RHEA-COMP:10287"/>
        <dbReference type="ChEBI" id="CHEBI:15378"/>
        <dbReference type="ChEBI" id="CHEBI:57856"/>
        <dbReference type="ChEBI" id="CHEBI:59789"/>
        <dbReference type="ChEBI" id="CHEBI:74506"/>
        <dbReference type="ChEBI" id="CHEBI:82748"/>
        <dbReference type="EC" id="2.1.1.199"/>
    </reaction>
</comment>
<comment type="subcellular location">
    <subcellularLocation>
        <location evidence="1">Cytoplasm</location>
    </subcellularLocation>
</comment>
<comment type="similarity">
    <text evidence="1">Belongs to the methyltransferase superfamily. RsmH family.</text>
</comment>
<keyword id="KW-0963">Cytoplasm</keyword>
<keyword id="KW-0489">Methyltransferase</keyword>
<keyword id="KW-0698">rRNA processing</keyword>
<keyword id="KW-0949">S-adenosyl-L-methionine</keyword>
<keyword id="KW-0808">Transferase</keyword>